<name>ENO_BORPE</name>
<reference key="1">
    <citation type="journal article" date="2003" name="Nat. Genet.">
        <title>Comparative analysis of the genome sequences of Bordetella pertussis, Bordetella parapertussis and Bordetella bronchiseptica.</title>
        <authorList>
            <person name="Parkhill J."/>
            <person name="Sebaihia M."/>
            <person name="Preston A."/>
            <person name="Murphy L.D."/>
            <person name="Thomson N.R."/>
            <person name="Harris D.E."/>
            <person name="Holden M.T.G."/>
            <person name="Churcher C.M."/>
            <person name="Bentley S.D."/>
            <person name="Mungall K.L."/>
            <person name="Cerdeno-Tarraga A.-M."/>
            <person name="Temple L."/>
            <person name="James K.D."/>
            <person name="Harris B."/>
            <person name="Quail M.A."/>
            <person name="Achtman M."/>
            <person name="Atkin R."/>
            <person name="Baker S."/>
            <person name="Basham D."/>
            <person name="Bason N."/>
            <person name="Cherevach I."/>
            <person name="Chillingworth T."/>
            <person name="Collins M."/>
            <person name="Cronin A."/>
            <person name="Davis P."/>
            <person name="Doggett J."/>
            <person name="Feltwell T."/>
            <person name="Goble A."/>
            <person name="Hamlin N."/>
            <person name="Hauser H."/>
            <person name="Holroyd S."/>
            <person name="Jagels K."/>
            <person name="Leather S."/>
            <person name="Moule S."/>
            <person name="Norberczak H."/>
            <person name="O'Neil S."/>
            <person name="Ormond D."/>
            <person name="Price C."/>
            <person name="Rabbinowitsch E."/>
            <person name="Rutter S."/>
            <person name="Sanders M."/>
            <person name="Saunders D."/>
            <person name="Seeger K."/>
            <person name="Sharp S."/>
            <person name="Simmonds M."/>
            <person name="Skelton J."/>
            <person name="Squares R."/>
            <person name="Squares S."/>
            <person name="Stevens K."/>
            <person name="Unwin L."/>
            <person name="Whitehead S."/>
            <person name="Barrell B.G."/>
            <person name="Maskell D.J."/>
        </authorList>
    </citation>
    <scope>NUCLEOTIDE SEQUENCE [LARGE SCALE GENOMIC DNA]</scope>
    <source>
        <strain>Tohama I / ATCC BAA-589 / NCTC 13251</strain>
    </source>
</reference>
<evidence type="ECO:0000255" key="1">
    <source>
        <dbReference type="HAMAP-Rule" id="MF_00318"/>
    </source>
</evidence>
<organism>
    <name type="scientific">Bordetella pertussis (strain Tohama I / ATCC BAA-589 / NCTC 13251)</name>
    <dbReference type="NCBI Taxonomy" id="257313"/>
    <lineage>
        <taxon>Bacteria</taxon>
        <taxon>Pseudomonadati</taxon>
        <taxon>Pseudomonadota</taxon>
        <taxon>Betaproteobacteria</taxon>
        <taxon>Burkholderiales</taxon>
        <taxon>Alcaligenaceae</taxon>
        <taxon>Bordetella</taxon>
    </lineage>
</organism>
<feature type="chain" id="PRO_0000133851" description="Enolase">
    <location>
        <begin position="1"/>
        <end position="428"/>
    </location>
</feature>
<feature type="active site" description="Proton donor" evidence="1">
    <location>
        <position position="205"/>
    </location>
</feature>
<feature type="active site" description="Proton acceptor" evidence="1">
    <location>
        <position position="338"/>
    </location>
</feature>
<feature type="binding site" evidence="1">
    <location>
        <position position="163"/>
    </location>
    <ligand>
        <name>(2R)-2-phosphoglycerate</name>
        <dbReference type="ChEBI" id="CHEBI:58289"/>
    </ligand>
</feature>
<feature type="binding site" evidence="1">
    <location>
        <position position="242"/>
    </location>
    <ligand>
        <name>Mg(2+)</name>
        <dbReference type="ChEBI" id="CHEBI:18420"/>
    </ligand>
</feature>
<feature type="binding site" evidence="1">
    <location>
        <position position="286"/>
    </location>
    <ligand>
        <name>Mg(2+)</name>
        <dbReference type="ChEBI" id="CHEBI:18420"/>
    </ligand>
</feature>
<feature type="binding site" evidence="1">
    <location>
        <position position="313"/>
    </location>
    <ligand>
        <name>Mg(2+)</name>
        <dbReference type="ChEBI" id="CHEBI:18420"/>
    </ligand>
</feature>
<feature type="binding site" evidence="1">
    <location>
        <position position="338"/>
    </location>
    <ligand>
        <name>(2R)-2-phosphoglycerate</name>
        <dbReference type="ChEBI" id="CHEBI:58289"/>
    </ligand>
</feature>
<feature type="binding site" evidence="1">
    <location>
        <position position="367"/>
    </location>
    <ligand>
        <name>(2R)-2-phosphoglycerate</name>
        <dbReference type="ChEBI" id="CHEBI:58289"/>
    </ligand>
</feature>
<feature type="binding site" evidence="1">
    <location>
        <position position="368"/>
    </location>
    <ligand>
        <name>(2R)-2-phosphoglycerate</name>
        <dbReference type="ChEBI" id="CHEBI:58289"/>
    </ligand>
</feature>
<feature type="binding site" evidence="1">
    <location>
        <position position="389"/>
    </location>
    <ligand>
        <name>(2R)-2-phosphoglycerate</name>
        <dbReference type="ChEBI" id="CHEBI:58289"/>
    </ligand>
</feature>
<sequence>MSAIVDIIGREILDSRGNPTVECDVLLESGAMGRASVPSGASTGSREAIELRDGDKGRYLGKGVLRAVENLNTEISEALMGLDAQEQTFVDRTLIELDGTDSKERLGANAMLAASMAVARAAADESGLSLYRYFGGSGPMSMPVPMMNVINGGAHANNTLDLQELMILPVGAASFREALRWGAEVFHMLKKLIHDQGMSTAVGDEGGFAPNVASHEAAIQLILKAITEAGYEPGTQIALGLDCASSEFYRDGKYTLAGEGGVSLSSQEFANLLATWCDKYPIISIEDGMAENDWDGWKLLTDQLGKKVQLVGDDLFVTNTRILREGIQKGVANSILIKINQIGTLTETFAAIEMAKRAGYTAVVSHRSGETEDSTIADIAVATNAMQIKTGSLSRSDRMAKYNQLLRIEEELAEVASYPGLEAFYNLR</sequence>
<proteinExistence type="inferred from homology"/>
<gene>
    <name evidence="1" type="primary">eno</name>
    <name type="ordered locus">BP2386</name>
</gene>
<accession>Q7VW79</accession>
<protein>
    <recommendedName>
        <fullName evidence="1">Enolase</fullName>
        <ecNumber evidence="1">4.2.1.11</ecNumber>
    </recommendedName>
    <alternativeName>
        <fullName evidence="1">2-phospho-D-glycerate hydro-lyase</fullName>
    </alternativeName>
    <alternativeName>
        <fullName evidence="1">2-phosphoglycerate dehydratase</fullName>
    </alternativeName>
</protein>
<dbReference type="EC" id="4.2.1.11" evidence="1"/>
<dbReference type="EMBL" id="BX640418">
    <property type="protein sequence ID" value="CAE42657.1"/>
    <property type="molecule type" value="Genomic_DNA"/>
</dbReference>
<dbReference type="RefSeq" id="NP_881019.1">
    <property type="nucleotide sequence ID" value="NC_002929.2"/>
</dbReference>
<dbReference type="RefSeq" id="WP_003813700.1">
    <property type="nucleotide sequence ID" value="NZ_CP039022.1"/>
</dbReference>
<dbReference type="SMR" id="Q7VW79"/>
<dbReference type="STRING" id="257313.BP2386"/>
<dbReference type="PaxDb" id="257313-BP2386"/>
<dbReference type="GeneID" id="93205034"/>
<dbReference type="KEGG" id="bpe:BP2386"/>
<dbReference type="PATRIC" id="fig|257313.5.peg.2569"/>
<dbReference type="eggNOG" id="COG0148">
    <property type="taxonomic scope" value="Bacteria"/>
</dbReference>
<dbReference type="HOGENOM" id="CLU_031223_2_1_4"/>
<dbReference type="UniPathway" id="UPA00109">
    <property type="reaction ID" value="UER00187"/>
</dbReference>
<dbReference type="Proteomes" id="UP000002676">
    <property type="component" value="Chromosome"/>
</dbReference>
<dbReference type="GO" id="GO:0009986">
    <property type="term" value="C:cell surface"/>
    <property type="evidence" value="ECO:0007669"/>
    <property type="project" value="UniProtKB-SubCell"/>
</dbReference>
<dbReference type="GO" id="GO:0005576">
    <property type="term" value="C:extracellular region"/>
    <property type="evidence" value="ECO:0007669"/>
    <property type="project" value="UniProtKB-SubCell"/>
</dbReference>
<dbReference type="GO" id="GO:0000015">
    <property type="term" value="C:phosphopyruvate hydratase complex"/>
    <property type="evidence" value="ECO:0007669"/>
    <property type="project" value="InterPro"/>
</dbReference>
<dbReference type="GO" id="GO:0000287">
    <property type="term" value="F:magnesium ion binding"/>
    <property type="evidence" value="ECO:0007669"/>
    <property type="project" value="UniProtKB-UniRule"/>
</dbReference>
<dbReference type="GO" id="GO:0004634">
    <property type="term" value="F:phosphopyruvate hydratase activity"/>
    <property type="evidence" value="ECO:0007669"/>
    <property type="project" value="UniProtKB-UniRule"/>
</dbReference>
<dbReference type="GO" id="GO:0006096">
    <property type="term" value="P:glycolytic process"/>
    <property type="evidence" value="ECO:0007669"/>
    <property type="project" value="UniProtKB-UniRule"/>
</dbReference>
<dbReference type="CDD" id="cd03313">
    <property type="entry name" value="enolase"/>
    <property type="match status" value="1"/>
</dbReference>
<dbReference type="FunFam" id="3.20.20.120:FF:000001">
    <property type="entry name" value="Enolase"/>
    <property type="match status" value="1"/>
</dbReference>
<dbReference type="FunFam" id="3.30.390.10:FF:000001">
    <property type="entry name" value="Enolase"/>
    <property type="match status" value="1"/>
</dbReference>
<dbReference type="Gene3D" id="3.20.20.120">
    <property type="entry name" value="Enolase-like C-terminal domain"/>
    <property type="match status" value="1"/>
</dbReference>
<dbReference type="Gene3D" id="3.30.390.10">
    <property type="entry name" value="Enolase-like, N-terminal domain"/>
    <property type="match status" value="1"/>
</dbReference>
<dbReference type="HAMAP" id="MF_00318">
    <property type="entry name" value="Enolase"/>
    <property type="match status" value="1"/>
</dbReference>
<dbReference type="InterPro" id="IPR000941">
    <property type="entry name" value="Enolase"/>
</dbReference>
<dbReference type="InterPro" id="IPR036849">
    <property type="entry name" value="Enolase-like_C_sf"/>
</dbReference>
<dbReference type="InterPro" id="IPR029017">
    <property type="entry name" value="Enolase-like_N"/>
</dbReference>
<dbReference type="InterPro" id="IPR020810">
    <property type="entry name" value="Enolase_C"/>
</dbReference>
<dbReference type="InterPro" id="IPR020809">
    <property type="entry name" value="Enolase_CS"/>
</dbReference>
<dbReference type="InterPro" id="IPR020811">
    <property type="entry name" value="Enolase_N"/>
</dbReference>
<dbReference type="NCBIfam" id="TIGR01060">
    <property type="entry name" value="eno"/>
    <property type="match status" value="1"/>
</dbReference>
<dbReference type="PANTHER" id="PTHR11902">
    <property type="entry name" value="ENOLASE"/>
    <property type="match status" value="1"/>
</dbReference>
<dbReference type="PANTHER" id="PTHR11902:SF1">
    <property type="entry name" value="ENOLASE"/>
    <property type="match status" value="1"/>
</dbReference>
<dbReference type="Pfam" id="PF00113">
    <property type="entry name" value="Enolase_C"/>
    <property type="match status" value="1"/>
</dbReference>
<dbReference type="Pfam" id="PF03952">
    <property type="entry name" value="Enolase_N"/>
    <property type="match status" value="1"/>
</dbReference>
<dbReference type="PIRSF" id="PIRSF001400">
    <property type="entry name" value="Enolase"/>
    <property type="match status" value="1"/>
</dbReference>
<dbReference type="PRINTS" id="PR00148">
    <property type="entry name" value="ENOLASE"/>
</dbReference>
<dbReference type="SFLD" id="SFLDF00002">
    <property type="entry name" value="enolase"/>
    <property type="match status" value="1"/>
</dbReference>
<dbReference type="SFLD" id="SFLDG00178">
    <property type="entry name" value="enolase"/>
    <property type="match status" value="1"/>
</dbReference>
<dbReference type="SMART" id="SM01192">
    <property type="entry name" value="Enolase_C"/>
    <property type="match status" value="1"/>
</dbReference>
<dbReference type="SMART" id="SM01193">
    <property type="entry name" value="Enolase_N"/>
    <property type="match status" value="1"/>
</dbReference>
<dbReference type="SUPFAM" id="SSF51604">
    <property type="entry name" value="Enolase C-terminal domain-like"/>
    <property type="match status" value="1"/>
</dbReference>
<dbReference type="SUPFAM" id="SSF54826">
    <property type="entry name" value="Enolase N-terminal domain-like"/>
    <property type="match status" value="1"/>
</dbReference>
<dbReference type="PROSITE" id="PS00164">
    <property type="entry name" value="ENOLASE"/>
    <property type="match status" value="1"/>
</dbReference>
<comment type="function">
    <text evidence="1">Catalyzes the reversible conversion of 2-phosphoglycerate (2-PG) into phosphoenolpyruvate (PEP). It is essential for the degradation of carbohydrates via glycolysis.</text>
</comment>
<comment type="catalytic activity">
    <reaction evidence="1">
        <text>(2R)-2-phosphoglycerate = phosphoenolpyruvate + H2O</text>
        <dbReference type="Rhea" id="RHEA:10164"/>
        <dbReference type="ChEBI" id="CHEBI:15377"/>
        <dbReference type="ChEBI" id="CHEBI:58289"/>
        <dbReference type="ChEBI" id="CHEBI:58702"/>
        <dbReference type="EC" id="4.2.1.11"/>
    </reaction>
</comment>
<comment type="cofactor">
    <cofactor evidence="1">
        <name>Mg(2+)</name>
        <dbReference type="ChEBI" id="CHEBI:18420"/>
    </cofactor>
    <text evidence="1">Binds a second Mg(2+) ion via substrate during catalysis.</text>
</comment>
<comment type="pathway">
    <text evidence="1">Carbohydrate degradation; glycolysis; pyruvate from D-glyceraldehyde 3-phosphate: step 4/5.</text>
</comment>
<comment type="subcellular location">
    <subcellularLocation>
        <location evidence="1">Cytoplasm</location>
    </subcellularLocation>
    <subcellularLocation>
        <location evidence="1">Secreted</location>
    </subcellularLocation>
    <subcellularLocation>
        <location evidence="1">Cell surface</location>
    </subcellularLocation>
    <text evidence="1">Fractions of enolase are present in both the cytoplasm and on the cell surface.</text>
</comment>
<comment type="similarity">
    <text evidence="1">Belongs to the enolase family.</text>
</comment>
<keyword id="KW-0963">Cytoplasm</keyword>
<keyword id="KW-0324">Glycolysis</keyword>
<keyword id="KW-0456">Lyase</keyword>
<keyword id="KW-0460">Magnesium</keyword>
<keyword id="KW-0479">Metal-binding</keyword>
<keyword id="KW-1185">Reference proteome</keyword>
<keyword id="KW-0964">Secreted</keyword>